<name>SYL_CLOB1</name>
<proteinExistence type="inferred from homology"/>
<reference key="1">
    <citation type="journal article" date="2007" name="PLoS ONE">
        <title>Analysis of the neurotoxin complex genes in Clostridium botulinum A1-A4 and B1 strains: BoNT/A3, /Ba4 and /B1 clusters are located within plasmids.</title>
        <authorList>
            <person name="Smith T.J."/>
            <person name="Hill K.K."/>
            <person name="Foley B.T."/>
            <person name="Detter J.C."/>
            <person name="Munk A.C."/>
            <person name="Bruce D.C."/>
            <person name="Doggett N.A."/>
            <person name="Smith L.A."/>
            <person name="Marks J.D."/>
            <person name="Xie G."/>
            <person name="Brettin T.S."/>
        </authorList>
    </citation>
    <scope>NUCLEOTIDE SEQUENCE [LARGE SCALE GENOMIC DNA]</scope>
    <source>
        <strain>ATCC 19397 / Type A</strain>
    </source>
</reference>
<gene>
    <name evidence="1" type="primary">leuS</name>
    <name type="ordered locus">CLB_0226</name>
</gene>
<sequence>MGNYSTKIDEKWQKKWEENSLYKFNNKNLDKKLYVLEMFSYPSGSKLHAGHWFNYGPVDSWARFKRMQGYNVFQPMGFDAFGLPAENYAIKTGIHPKDSTFKNIETMETQLKAMGAMFNWENEVITCSPDYYKWTQWLFLKLYEKGLAYKKKAPVNWCPSCNTVLANEQVLDGKCERCDSNVDKKNLEQWFLKITDYADELLEKLDELDWPEKTKAMQKHWIGKSVGAEVTFNVADSDLSFNVFTTRVDTLFGVTYVVLAPENDLVDKLTTPENKAEVESYKTQAKNQSDIERQSITREKTGVFSGSYAINPINGKKVPIWIGDYVLNTYGTGCVMAVPAHDERDFAFATKYNLPIERVIEGGDSLPYTEYGGMVNSGEFDGLLGNEAKEAVISKLESMNLGRKKINYRLRDWLVSRQRYWGAPIPIIYCEKCGTVEVPIEQLPVELPYNVEFSPDGKSPLGKCDDFINTTCPKCGGPAKREADTLDTFVCSSWYYLRYPDNNNEKDAFNPELINKMLPVDKYVGGPEHACMHLLYARFITKALRDMGYLNFDEPFLSLTHQGLILGPDGLKMSKSKGNTISPDDYIKEFGADVFRMYLMFGFDYTEGGAWSDDAIKSIGKFVDRVERILENAREEIKNSKDNKSTMDKDEKELNYVRHHSIKSITEDIDKMQFNTSIARLMEFTNALSKYLGIDAIKNALFLRESIIDFITLLAPFAPHFAEEQWKLIGINSSIFNEKWPEFDPKALIKDEVEIAVQVNGKIRAKINISTSSSEDEIKESALNNEDIKNSIGDKEIKKVIVIKNRLVNIVAK</sequence>
<keyword id="KW-0030">Aminoacyl-tRNA synthetase</keyword>
<keyword id="KW-0067">ATP-binding</keyword>
<keyword id="KW-0963">Cytoplasm</keyword>
<keyword id="KW-0436">Ligase</keyword>
<keyword id="KW-0547">Nucleotide-binding</keyword>
<keyword id="KW-0648">Protein biosynthesis</keyword>
<comment type="catalytic activity">
    <reaction evidence="1">
        <text>tRNA(Leu) + L-leucine + ATP = L-leucyl-tRNA(Leu) + AMP + diphosphate</text>
        <dbReference type="Rhea" id="RHEA:11688"/>
        <dbReference type="Rhea" id="RHEA-COMP:9613"/>
        <dbReference type="Rhea" id="RHEA-COMP:9622"/>
        <dbReference type="ChEBI" id="CHEBI:30616"/>
        <dbReference type="ChEBI" id="CHEBI:33019"/>
        <dbReference type="ChEBI" id="CHEBI:57427"/>
        <dbReference type="ChEBI" id="CHEBI:78442"/>
        <dbReference type="ChEBI" id="CHEBI:78494"/>
        <dbReference type="ChEBI" id="CHEBI:456215"/>
        <dbReference type="EC" id="6.1.1.4"/>
    </reaction>
</comment>
<comment type="subcellular location">
    <subcellularLocation>
        <location evidence="1">Cytoplasm</location>
    </subcellularLocation>
</comment>
<comment type="similarity">
    <text evidence="1">Belongs to the class-I aminoacyl-tRNA synthetase family.</text>
</comment>
<dbReference type="EC" id="6.1.1.4" evidence="1"/>
<dbReference type="EMBL" id="CP000726">
    <property type="protein sequence ID" value="ABS34298.1"/>
    <property type="molecule type" value="Genomic_DNA"/>
</dbReference>
<dbReference type="RefSeq" id="WP_011948005.1">
    <property type="nucleotide sequence ID" value="NC_009697.1"/>
</dbReference>
<dbReference type="SMR" id="A7FPP5"/>
<dbReference type="GeneID" id="5187707"/>
<dbReference type="KEGG" id="cba:CLB_0226"/>
<dbReference type="HOGENOM" id="CLU_004427_0_0_9"/>
<dbReference type="GO" id="GO:0005829">
    <property type="term" value="C:cytosol"/>
    <property type="evidence" value="ECO:0007669"/>
    <property type="project" value="TreeGrafter"/>
</dbReference>
<dbReference type="GO" id="GO:0002161">
    <property type="term" value="F:aminoacyl-tRNA deacylase activity"/>
    <property type="evidence" value="ECO:0007669"/>
    <property type="project" value="InterPro"/>
</dbReference>
<dbReference type="GO" id="GO:0005524">
    <property type="term" value="F:ATP binding"/>
    <property type="evidence" value="ECO:0007669"/>
    <property type="project" value="UniProtKB-UniRule"/>
</dbReference>
<dbReference type="GO" id="GO:0004823">
    <property type="term" value="F:leucine-tRNA ligase activity"/>
    <property type="evidence" value="ECO:0007669"/>
    <property type="project" value="UniProtKB-UniRule"/>
</dbReference>
<dbReference type="GO" id="GO:0006429">
    <property type="term" value="P:leucyl-tRNA aminoacylation"/>
    <property type="evidence" value="ECO:0007669"/>
    <property type="project" value="UniProtKB-UniRule"/>
</dbReference>
<dbReference type="CDD" id="cd07958">
    <property type="entry name" value="Anticodon_Ia_Leu_BEm"/>
    <property type="match status" value="1"/>
</dbReference>
<dbReference type="CDD" id="cd00812">
    <property type="entry name" value="LeuRS_core"/>
    <property type="match status" value="1"/>
</dbReference>
<dbReference type="FunFam" id="1.10.730.10:FF:000002">
    <property type="entry name" value="Leucine--tRNA ligase"/>
    <property type="match status" value="1"/>
</dbReference>
<dbReference type="FunFam" id="3.10.20.590:FF:000001">
    <property type="entry name" value="Leucine--tRNA ligase"/>
    <property type="match status" value="1"/>
</dbReference>
<dbReference type="FunFam" id="3.40.50.620:FF:000003">
    <property type="entry name" value="Leucine--tRNA ligase"/>
    <property type="match status" value="1"/>
</dbReference>
<dbReference type="FunFam" id="3.40.50.620:FF:000056">
    <property type="entry name" value="Leucine--tRNA ligase"/>
    <property type="match status" value="1"/>
</dbReference>
<dbReference type="Gene3D" id="3.10.20.590">
    <property type="match status" value="1"/>
</dbReference>
<dbReference type="Gene3D" id="3.40.50.620">
    <property type="entry name" value="HUPs"/>
    <property type="match status" value="2"/>
</dbReference>
<dbReference type="Gene3D" id="1.10.730.10">
    <property type="entry name" value="Isoleucyl-tRNA Synthetase, Domain 1"/>
    <property type="match status" value="1"/>
</dbReference>
<dbReference type="HAMAP" id="MF_00049_B">
    <property type="entry name" value="Leu_tRNA_synth_B"/>
    <property type="match status" value="1"/>
</dbReference>
<dbReference type="InterPro" id="IPR002300">
    <property type="entry name" value="aa-tRNA-synth_Ia"/>
</dbReference>
<dbReference type="InterPro" id="IPR002302">
    <property type="entry name" value="Leu-tRNA-ligase"/>
</dbReference>
<dbReference type="InterPro" id="IPR025709">
    <property type="entry name" value="Leu_tRNA-synth_edit"/>
</dbReference>
<dbReference type="InterPro" id="IPR013155">
    <property type="entry name" value="M/V/L/I-tRNA-synth_anticd-bd"/>
</dbReference>
<dbReference type="InterPro" id="IPR015413">
    <property type="entry name" value="Methionyl/Leucyl_tRNA_Synth"/>
</dbReference>
<dbReference type="InterPro" id="IPR014729">
    <property type="entry name" value="Rossmann-like_a/b/a_fold"/>
</dbReference>
<dbReference type="InterPro" id="IPR009080">
    <property type="entry name" value="tRNAsynth_Ia_anticodon-bd"/>
</dbReference>
<dbReference type="InterPro" id="IPR009008">
    <property type="entry name" value="Val/Leu/Ile-tRNA-synth_edit"/>
</dbReference>
<dbReference type="NCBIfam" id="TIGR00396">
    <property type="entry name" value="leuS_bact"/>
    <property type="match status" value="1"/>
</dbReference>
<dbReference type="PANTHER" id="PTHR43740:SF2">
    <property type="entry name" value="LEUCINE--TRNA LIGASE, MITOCHONDRIAL"/>
    <property type="match status" value="1"/>
</dbReference>
<dbReference type="PANTHER" id="PTHR43740">
    <property type="entry name" value="LEUCYL-TRNA SYNTHETASE"/>
    <property type="match status" value="1"/>
</dbReference>
<dbReference type="Pfam" id="PF08264">
    <property type="entry name" value="Anticodon_1"/>
    <property type="match status" value="1"/>
</dbReference>
<dbReference type="Pfam" id="PF00133">
    <property type="entry name" value="tRNA-synt_1"/>
    <property type="match status" value="1"/>
</dbReference>
<dbReference type="Pfam" id="PF13603">
    <property type="entry name" value="tRNA-synt_1_2"/>
    <property type="match status" value="1"/>
</dbReference>
<dbReference type="Pfam" id="PF09334">
    <property type="entry name" value="tRNA-synt_1g"/>
    <property type="match status" value="1"/>
</dbReference>
<dbReference type="PRINTS" id="PR00985">
    <property type="entry name" value="TRNASYNTHLEU"/>
</dbReference>
<dbReference type="SUPFAM" id="SSF47323">
    <property type="entry name" value="Anticodon-binding domain of a subclass of class I aminoacyl-tRNA synthetases"/>
    <property type="match status" value="1"/>
</dbReference>
<dbReference type="SUPFAM" id="SSF52374">
    <property type="entry name" value="Nucleotidylyl transferase"/>
    <property type="match status" value="1"/>
</dbReference>
<dbReference type="SUPFAM" id="SSF50677">
    <property type="entry name" value="ValRS/IleRS/LeuRS editing domain"/>
    <property type="match status" value="1"/>
</dbReference>
<feature type="chain" id="PRO_1000009325" description="Leucine--tRNA ligase">
    <location>
        <begin position="1"/>
        <end position="813"/>
    </location>
</feature>
<feature type="short sequence motif" description="'HIGH' region">
    <location>
        <begin position="40"/>
        <end position="51"/>
    </location>
</feature>
<feature type="short sequence motif" description="'KMSKS' region">
    <location>
        <begin position="572"/>
        <end position="576"/>
    </location>
</feature>
<feature type="binding site" evidence="1">
    <location>
        <position position="575"/>
    </location>
    <ligand>
        <name>ATP</name>
        <dbReference type="ChEBI" id="CHEBI:30616"/>
    </ligand>
</feature>
<protein>
    <recommendedName>
        <fullName evidence="1">Leucine--tRNA ligase</fullName>
        <ecNumber evidence="1">6.1.1.4</ecNumber>
    </recommendedName>
    <alternativeName>
        <fullName evidence="1">Leucyl-tRNA synthetase</fullName>
        <shortName evidence="1">LeuRS</shortName>
    </alternativeName>
</protein>
<accession>A7FPP5</accession>
<evidence type="ECO:0000255" key="1">
    <source>
        <dbReference type="HAMAP-Rule" id="MF_00049"/>
    </source>
</evidence>
<organism>
    <name type="scientific">Clostridium botulinum (strain ATCC 19397 / Type A)</name>
    <dbReference type="NCBI Taxonomy" id="441770"/>
    <lineage>
        <taxon>Bacteria</taxon>
        <taxon>Bacillati</taxon>
        <taxon>Bacillota</taxon>
        <taxon>Clostridia</taxon>
        <taxon>Eubacteriales</taxon>
        <taxon>Clostridiaceae</taxon>
        <taxon>Clostridium</taxon>
    </lineage>
</organism>